<proteinExistence type="inferred from homology"/>
<name>RLMN_RHILO</name>
<gene>
    <name evidence="1" type="primary">rlmN</name>
    <name type="ordered locus">mlr4359</name>
</gene>
<keyword id="KW-0004">4Fe-4S</keyword>
<keyword id="KW-0963">Cytoplasm</keyword>
<keyword id="KW-1015">Disulfide bond</keyword>
<keyword id="KW-0408">Iron</keyword>
<keyword id="KW-0411">Iron-sulfur</keyword>
<keyword id="KW-0479">Metal-binding</keyword>
<keyword id="KW-0489">Methyltransferase</keyword>
<keyword id="KW-0698">rRNA processing</keyword>
<keyword id="KW-0949">S-adenosyl-L-methionine</keyword>
<keyword id="KW-0808">Transferase</keyword>
<keyword id="KW-0819">tRNA processing</keyword>
<comment type="function">
    <text evidence="1">Specifically methylates position 2 of adenine 2503 in 23S rRNA and position 2 of adenine 37 in tRNAs. m2A2503 modification seems to play a crucial role in the proofreading step occurring at the peptidyl transferase center and thus would serve to optimize ribosomal fidelity.</text>
</comment>
<comment type="catalytic activity">
    <reaction evidence="1">
        <text>adenosine(2503) in 23S rRNA + 2 reduced [2Fe-2S]-[ferredoxin] + 2 S-adenosyl-L-methionine = 2-methyladenosine(2503) in 23S rRNA + 5'-deoxyadenosine + L-methionine + 2 oxidized [2Fe-2S]-[ferredoxin] + S-adenosyl-L-homocysteine</text>
        <dbReference type="Rhea" id="RHEA:42916"/>
        <dbReference type="Rhea" id="RHEA-COMP:10000"/>
        <dbReference type="Rhea" id="RHEA-COMP:10001"/>
        <dbReference type="Rhea" id="RHEA-COMP:10152"/>
        <dbReference type="Rhea" id="RHEA-COMP:10282"/>
        <dbReference type="ChEBI" id="CHEBI:17319"/>
        <dbReference type="ChEBI" id="CHEBI:33737"/>
        <dbReference type="ChEBI" id="CHEBI:33738"/>
        <dbReference type="ChEBI" id="CHEBI:57844"/>
        <dbReference type="ChEBI" id="CHEBI:57856"/>
        <dbReference type="ChEBI" id="CHEBI:59789"/>
        <dbReference type="ChEBI" id="CHEBI:74411"/>
        <dbReference type="ChEBI" id="CHEBI:74497"/>
        <dbReference type="EC" id="2.1.1.192"/>
    </reaction>
</comment>
<comment type="catalytic activity">
    <reaction evidence="1">
        <text>adenosine(37) in tRNA + 2 reduced [2Fe-2S]-[ferredoxin] + 2 S-adenosyl-L-methionine = 2-methyladenosine(37) in tRNA + 5'-deoxyadenosine + L-methionine + 2 oxidized [2Fe-2S]-[ferredoxin] + S-adenosyl-L-homocysteine</text>
        <dbReference type="Rhea" id="RHEA:43332"/>
        <dbReference type="Rhea" id="RHEA-COMP:10000"/>
        <dbReference type="Rhea" id="RHEA-COMP:10001"/>
        <dbReference type="Rhea" id="RHEA-COMP:10162"/>
        <dbReference type="Rhea" id="RHEA-COMP:10485"/>
        <dbReference type="ChEBI" id="CHEBI:17319"/>
        <dbReference type="ChEBI" id="CHEBI:33737"/>
        <dbReference type="ChEBI" id="CHEBI:33738"/>
        <dbReference type="ChEBI" id="CHEBI:57844"/>
        <dbReference type="ChEBI" id="CHEBI:57856"/>
        <dbReference type="ChEBI" id="CHEBI:59789"/>
        <dbReference type="ChEBI" id="CHEBI:74411"/>
        <dbReference type="ChEBI" id="CHEBI:74497"/>
        <dbReference type="EC" id="2.1.1.192"/>
    </reaction>
</comment>
<comment type="cofactor">
    <cofactor evidence="1">
        <name>[4Fe-4S] cluster</name>
        <dbReference type="ChEBI" id="CHEBI:49883"/>
    </cofactor>
    <text evidence="1">Binds 1 [4Fe-4S] cluster. The cluster is coordinated with 3 cysteines and an exchangeable S-adenosyl-L-methionine.</text>
</comment>
<comment type="subcellular location">
    <subcellularLocation>
        <location evidence="1">Cytoplasm</location>
    </subcellularLocation>
</comment>
<comment type="miscellaneous">
    <text evidence="1">Reaction proceeds by a ping-pong mechanism involving intermediate methylation of a conserved cysteine residue.</text>
</comment>
<comment type="similarity">
    <text evidence="1">Belongs to the radical SAM superfamily. RlmN family.</text>
</comment>
<evidence type="ECO:0000255" key="1">
    <source>
        <dbReference type="HAMAP-Rule" id="MF_01849"/>
    </source>
</evidence>
<evidence type="ECO:0000255" key="2">
    <source>
        <dbReference type="PROSITE-ProRule" id="PRU01266"/>
    </source>
</evidence>
<protein>
    <recommendedName>
        <fullName evidence="1">Dual-specificity RNA methyltransferase RlmN</fullName>
        <ecNumber evidence="1">2.1.1.192</ecNumber>
    </recommendedName>
    <alternativeName>
        <fullName evidence="1">23S rRNA (adenine(2503)-C(2))-methyltransferase</fullName>
    </alternativeName>
    <alternativeName>
        <fullName evidence="1">23S rRNA m2A2503 methyltransferase</fullName>
    </alternativeName>
    <alternativeName>
        <fullName evidence="1">Ribosomal RNA large subunit methyltransferase N</fullName>
    </alternativeName>
    <alternativeName>
        <fullName evidence="1">tRNA (adenine(37)-C(2))-methyltransferase</fullName>
    </alternativeName>
    <alternativeName>
        <fullName evidence="1">tRNA m2A37 methyltransferase</fullName>
    </alternativeName>
</protein>
<dbReference type="EC" id="2.1.1.192" evidence="1"/>
<dbReference type="EMBL" id="BA000012">
    <property type="protein sequence ID" value="BAB51034.1"/>
    <property type="molecule type" value="Genomic_DNA"/>
</dbReference>
<dbReference type="RefSeq" id="WP_010912376.1">
    <property type="nucleotide sequence ID" value="NC_002678.2"/>
</dbReference>
<dbReference type="SMR" id="Q98E86"/>
<dbReference type="GeneID" id="66681214"/>
<dbReference type="KEGG" id="mlo:mlr4359"/>
<dbReference type="eggNOG" id="COG0820">
    <property type="taxonomic scope" value="Bacteria"/>
</dbReference>
<dbReference type="HOGENOM" id="CLU_029101_0_0_5"/>
<dbReference type="Proteomes" id="UP000000552">
    <property type="component" value="Chromosome"/>
</dbReference>
<dbReference type="GO" id="GO:0005737">
    <property type="term" value="C:cytoplasm"/>
    <property type="evidence" value="ECO:0007669"/>
    <property type="project" value="UniProtKB-SubCell"/>
</dbReference>
<dbReference type="GO" id="GO:0051539">
    <property type="term" value="F:4 iron, 4 sulfur cluster binding"/>
    <property type="evidence" value="ECO:0007669"/>
    <property type="project" value="UniProtKB-UniRule"/>
</dbReference>
<dbReference type="GO" id="GO:0046872">
    <property type="term" value="F:metal ion binding"/>
    <property type="evidence" value="ECO:0007669"/>
    <property type="project" value="UniProtKB-KW"/>
</dbReference>
<dbReference type="GO" id="GO:0070040">
    <property type="term" value="F:rRNA (adenine(2503)-C2-)-methyltransferase activity"/>
    <property type="evidence" value="ECO:0007669"/>
    <property type="project" value="UniProtKB-UniRule"/>
</dbReference>
<dbReference type="GO" id="GO:0019843">
    <property type="term" value="F:rRNA binding"/>
    <property type="evidence" value="ECO:0007669"/>
    <property type="project" value="UniProtKB-UniRule"/>
</dbReference>
<dbReference type="GO" id="GO:0002935">
    <property type="term" value="F:tRNA (adenine(37)-C2)-methyltransferase activity"/>
    <property type="evidence" value="ECO:0007669"/>
    <property type="project" value="UniProtKB-UniRule"/>
</dbReference>
<dbReference type="GO" id="GO:0000049">
    <property type="term" value="F:tRNA binding"/>
    <property type="evidence" value="ECO:0007669"/>
    <property type="project" value="UniProtKB-UniRule"/>
</dbReference>
<dbReference type="GO" id="GO:0070475">
    <property type="term" value="P:rRNA base methylation"/>
    <property type="evidence" value="ECO:0007669"/>
    <property type="project" value="UniProtKB-UniRule"/>
</dbReference>
<dbReference type="GO" id="GO:0030488">
    <property type="term" value="P:tRNA methylation"/>
    <property type="evidence" value="ECO:0007669"/>
    <property type="project" value="UniProtKB-UniRule"/>
</dbReference>
<dbReference type="CDD" id="cd01335">
    <property type="entry name" value="Radical_SAM"/>
    <property type="match status" value="1"/>
</dbReference>
<dbReference type="FunFam" id="3.20.20.70:FF:000008">
    <property type="entry name" value="Dual-specificity RNA methyltransferase RlmN"/>
    <property type="match status" value="1"/>
</dbReference>
<dbReference type="Gene3D" id="1.10.150.530">
    <property type="match status" value="1"/>
</dbReference>
<dbReference type="Gene3D" id="3.20.20.70">
    <property type="entry name" value="Aldolase class I"/>
    <property type="match status" value="1"/>
</dbReference>
<dbReference type="HAMAP" id="MF_01849">
    <property type="entry name" value="RNA_methyltr_RlmN"/>
    <property type="match status" value="1"/>
</dbReference>
<dbReference type="InterPro" id="IPR013785">
    <property type="entry name" value="Aldolase_TIM"/>
</dbReference>
<dbReference type="InterPro" id="IPR040072">
    <property type="entry name" value="Methyltransferase_A"/>
</dbReference>
<dbReference type="InterPro" id="IPR048641">
    <property type="entry name" value="RlmN_N"/>
</dbReference>
<dbReference type="InterPro" id="IPR027492">
    <property type="entry name" value="RNA_MTrfase_RlmN"/>
</dbReference>
<dbReference type="InterPro" id="IPR004383">
    <property type="entry name" value="rRNA_lsu_MTrfase_RlmN/Cfr"/>
</dbReference>
<dbReference type="InterPro" id="IPR007197">
    <property type="entry name" value="rSAM"/>
</dbReference>
<dbReference type="NCBIfam" id="TIGR00048">
    <property type="entry name" value="rRNA_mod_RlmN"/>
    <property type="match status" value="1"/>
</dbReference>
<dbReference type="PANTHER" id="PTHR30544">
    <property type="entry name" value="23S RRNA METHYLTRANSFERASE"/>
    <property type="match status" value="1"/>
</dbReference>
<dbReference type="PANTHER" id="PTHR30544:SF5">
    <property type="entry name" value="RADICAL SAM CORE DOMAIN-CONTAINING PROTEIN"/>
    <property type="match status" value="1"/>
</dbReference>
<dbReference type="Pfam" id="PF04055">
    <property type="entry name" value="Radical_SAM"/>
    <property type="match status" value="1"/>
</dbReference>
<dbReference type="Pfam" id="PF21016">
    <property type="entry name" value="RlmN_N"/>
    <property type="match status" value="1"/>
</dbReference>
<dbReference type="PIRSF" id="PIRSF006004">
    <property type="entry name" value="CHP00048"/>
    <property type="match status" value="1"/>
</dbReference>
<dbReference type="SFLD" id="SFLDF00275">
    <property type="entry name" value="adenosine_C2_methyltransferase"/>
    <property type="match status" value="1"/>
</dbReference>
<dbReference type="SFLD" id="SFLDS00029">
    <property type="entry name" value="Radical_SAM"/>
    <property type="match status" value="1"/>
</dbReference>
<dbReference type="SUPFAM" id="SSF102114">
    <property type="entry name" value="Radical SAM enzymes"/>
    <property type="match status" value="1"/>
</dbReference>
<dbReference type="PROSITE" id="PS51918">
    <property type="entry name" value="RADICAL_SAM"/>
    <property type="match status" value="1"/>
</dbReference>
<organism>
    <name type="scientific">Mesorhizobium japonicum (strain LMG 29417 / CECT 9101 / MAFF 303099)</name>
    <name type="common">Mesorhizobium loti (strain MAFF 303099)</name>
    <dbReference type="NCBI Taxonomy" id="266835"/>
    <lineage>
        <taxon>Bacteria</taxon>
        <taxon>Pseudomonadati</taxon>
        <taxon>Pseudomonadota</taxon>
        <taxon>Alphaproteobacteria</taxon>
        <taxon>Hyphomicrobiales</taxon>
        <taxon>Phyllobacteriaceae</taxon>
        <taxon>Mesorhizobium</taxon>
    </lineage>
</organism>
<feature type="chain" id="PRO_0000350359" description="Dual-specificity RNA methyltransferase RlmN">
    <location>
        <begin position="1"/>
        <end position="410"/>
    </location>
</feature>
<feature type="domain" description="Radical SAM core" evidence="2">
    <location>
        <begin position="129"/>
        <end position="378"/>
    </location>
</feature>
<feature type="active site" description="Proton acceptor" evidence="1">
    <location>
        <position position="123"/>
    </location>
</feature>
<feature type="active site" description="S-methylcysteine intermediate" evidence="1">
    <location>
        <position position="381"/>
    </location>
</feature>
<feature type="binding site" evidence="1">
    <location>
        <position position="143"/>
    </location>
    <ligand>
        <name>[4Fe-4S] cluster</name>
        <dbReference type="ChEBI" id="CHEBI:49883"/>
        <note>4Fe-4S-S-AdoMet</note>
    </ligand>
</feature>
<feature type="binding site" evidence="1">
    <location>
        <position position="147"/>
    </location>
    <ligand>
        <name>[4Fe-4S] cluster</name>
        <dbReference type="ChEBI" id="CHEBI:49883"/>
        <note>4Fe-4S-S-AdoMet</note>
    </ligand>
</feature>
<feature type="binding site" evidence="1">
    <location>
        <position position="150"/>
    </location>
    <ligand>
        <name>[4Fe-4S] cluster</name>
        <dbReference type="ChEBI" id="CHEBI:49883"/>
        <note>4Fe-4S-S-AdoMet</note>
    </ligand>
</feature>
<feature type="binding site" evidence="1">
    <location>
        <begin position="207"/>
        <end position="208"/>
    </location>
    <ligand>
        <name>S-adenosyl-L-methionine</name>
        <dbReference type="ChEBI" id="CHEBI:59789"/>
    </ligand>
</feature>
<feature type="binding site" evidence="1">
    <location>
        <position position="239"/>
    </location>
    <ligand>
        <name>S-adenosyl-L-methionine</name>
        <dbReference type="ChEBI" id="CHEBI:59789"/>
    </ligand>
</feature>
<feature type="binding site" evidence="1">
    <location>
        <begin position="261"/>
        <end position="263"/>
    </location>
    <ligand>
        <name>S-adenosyl-L-methionine</name>
        <dbReference type="ChEBI" id="CHEBI:59789"/>
    </ligand>
</feature>
<feature type="binding site" evidence="1">
    <location>
        <position position="338"/>
    </location>
    <ligand>
        <name>S-adenosyl-L-methionine</name>
        <dbReference type="ChEBI" id="CHEBI:59789"/>
    </ligand>
</feature>
<feature type="disulfide bond" description="(transient)" evidence="1">
    <location>
        <begin position="136"/>
        <end position="381"/>
    </location>
</feature>
<accession>Q98E86</accession>
<sequence>MTLSFDLTTEGARDALRARAAPEKPSLIGLTRAELGEALVASGIVPERQAKMRAQQLWHWMYVRGVSDFAGMFNISKDLRAELDKHFTVARPEIVEEQISSDGTRKWLFRFPPRGAGRPVEIETVYIPEEGRGTLCISSQVGCTLTCSFCHTGTQKLVRNLTTEEILAQLLTARDRLGDFPDRDTPDGAIVPAEGRKVSNIVMMGMGEPLYNFEAVKKALLIASDGDGLSLSKRRITLSTSGVVPEIFRTGEEIGVMLAISLHATNDDLRDLLVPINKKYPLKELIAACRAYPGLSNAKRITFEYVMLKDVNDSIEDAKGLIKLLKGIPAKINLIPFNPWPGTNYQCSDWETIEKFADYINNAGYASPIRTPRGRDILAACGQLKSESERMRKVDRLALEAMMIAGHGEA</sequence>
<reference key="1">
    <citation type="journal article" date="2000" name="DNA Res.">
        <title>Complete genome structure of the nitrogen-fixing symbiotic bacterium Mesorhizobium loti.</title>
        <authorList>
            <person name="Kaneko T."/>
            <person name="Nakamura Y."/>
            <person name="Sato S."/>
            <person name="Asamizu E."/>
            <person name="Kato T."/>
            <person name="Sasamoto S."/>
            <person name="Watanabe A."/>
            <person name="Idesawa K."/>
            <person name="Ishikawa A."/>
            <person name="Kawashima K."/>
            <person name="Kimura T."/>
            <person name="Kishida Y."/>
            <person name="Kiyokawa C."/>
            <person name="Kohara M."/>
            <person name="Matsumoto M."/>
            <person name="Matsuno A."/>
            <person name="Mochizuki Y."/>
            <person name="Nakayama S."/>
            <person name="Nakazaki N."/>
            <person name="Shimpo S."/>
            <person name="Sugimoto M."/>
            <person name="Takeuchi C."/>
            <person name="Yamada M."/>
            <person name="Tabata S."/>
        </authorList>
    </citation>
    <scope>NUCLEOTIDE SEQUENCE [LARGE SCALE GENOMIC DNA]</scope>
    <source>
        <strain>LMG 29417 / CECT 9101 / MAFF 303099</strain>
    </source>
</reference>